<comment type="function">
    <text evidence="2 3 4 5">Photoreceptor for short wavelength (UV) light that mediates UV-light-induced avoidance behavior (PubMed:18687026, PubMed:20436480, PubMed:27863243). Directly senses and absorbs both UV-A and UV-B light with very high efficiency (PubMed:27863243). Absorption of UV-B but not UV-A light shows resistance to photobleaching (PubMed:27863243). In contrast to other photoreceptors, does not use a prosthetic chromophore to capture photons and only depends on its protein conformation (PubMed:27863243). Might have a role in response to white light exposure (PubMed:29500338).</text>
</comment>
<comment type="subcellular location">
    <subcellularLocation>
        <location evidence="4">Cell membrane</location>
        <topology evidence="1">Multi-pass membrane protein</topology>
    </subcellularLocation>
</comment>
<comment type="tissue specificity">
    <text evidence="2">Expressed in the AVG and PVT neurons of the tail.</text>
</comment>
<comment type="domain">
    <text evidence="4">In contrast to other members of the family, adopts a reversed membrane topology.</text>
</comment>
<comment type="disruption phenotype">
    <text evidence="2 4">Worms exhibit no response to blue-violet light but respond to physical stimulation.</text>
</comment>
<comment type="similarity">
    <text evidence="6">Belongs to the insect chemoreceptor superfamily. Gustatory receptor (GR) family.</text>
</comment>
<comment type="caution">
    <text evidence="2 4">Was initially thought to play a role in the gustatory response (PubMed:18687026). However, it was later shown that it acts as a photoreceptor for short wavelength (UV) light (PubMed:27863243).</text>
</comment>
<comment type="online information" name="Protein Spotlight">
    <link uri="https://www.proteinspotlight.org/back_issues/194/"/>
    <text>A taste of light - Issue 194 of August 2017</text>
</comment>
<evidence type="ECO:0000255" key="1"/>
<evidence type="ECO:0000269" key="2">
    <source>
    </source>
</evidence>
<evidence type="ECO:0000269" key="3">
    <source>
    </source>
</evidence>
<evidence type="ECO:0000269" key="4">
    <source>
    </source>
</evidence>
<evidence type="ECO:0000269" key="5">
    <source>
    </source>
</evidence>
<evidence type="ECO:0000305" key="6"/>
<evidence type="ECO:0000305" key="7">
    <source>
    </source>
</evidence>
<evidence type="ECO:0000312" key="8">
    <source>
        <dbReference type="WormBase" id="C14F11.3"/>
    </source>
</evidence>
<gene>
    <name evidence="8" type="primary">lite-1</name>
    <name evidence="8" type="synonym">gur-2</name>
    <name evidence="8" type="ORF">C14F11.3</name>
</gene>
<protein>
    <recommendedName>
        <fullName>High-energy light unresponsive protein 1</fullName>
    </recommendedName>
</protein>
<keyword id="KW-1003">Cell membrane</keyword>
<keyword id="KW-0157">Chromophore</keyword>
<keyword id="KW-0297">G-protein coupled receptor</keyword>
<keyword id="KW-0472">Membrane</keyword>
<keyword id="KW-0600">Photoreceptor protein</keyword>
<keyword id="KW-0675">Receptor</keyword>
<keyword id="KW-1185">Reference proteome</keyword>
<keyword id="KW-0716">Sensory transduction</keyword>
<keyword id="KW-0807">Transducer</keyword>
<keyword id="KW-0812">Transmembrane</keyword>
<keyword id="KW-1133">Transmembrane helix</keyword>
<name>LITE1_CAEEL</name>
<accession>Q17990</accession>
<accession>Q963E8</accession>
<organism>
    <name type="scientific">Caenorhabditis elegans</name>
    <dbReference type="NCBI Taxonomy" id="6239"/>
    <lineage>
        <taxon>Eukaryota</taxon>
        <taxon>Metazoa</taxon>
        <taxon>Ecdysozoa</taxon>
        <taxon>Nematoda</taxon>
        <taxon>Chromadorea</taxon>
        <taxon>Rhabditida</taxon>
        <taxon>Rhabditina</taxon>
        <taxon>Rhabditomorpha</taxon>
        <taxon>Rhabditoidea</taxon>
        <taxon>Rhabditidae</taxon>
        <taxon>Peloderinae</taxon>
        <taxon>Caenorhabditis</taxon>
    </lineage>
</organism>
<feature type="chain" id="PRO_0000352777" description="High-energy light unresponsive protein 1">
    <location>
        <begin position="1"/>
        <end position="439"/>
    </location>
</feature>
<feature type="topological domain" description="Cytoplasmic" evidence="7">
    <location>
        <begin position="1"/>
        <end position="67"/>
    </location>
</feature>
<feature type="transmembrane region" description="Helical; Name=1" evidence="1">
    <location>
        <begin position="68"/>
        <end position="88"/>
    </location>
</feature>
<feature type="topological domain" description="Extracellular" evidence="7">
    <location>
        <begin position="89"/>
        <end position="114"/>
    </location>
</feature>
<feature type="transmembrane region" description="Helical; Name=2" evidence="1">
    <location>
        <begin position="115"/>
        <end position="135"/>
    </location>
</feature>
<feature type="topological domain" description="Cytoplasmic" evidence="7">
    <location>
        <begin position="136"/>
        <end position="164"/>
    </location>
</feature>
<feature type="transmembrane region" description="Helical; Name=3" evidence="1">
    <location>
        <begin position="165"/>
        <end position="185"/>
    </location>
</feature>
<feature type="topological domain" description="Extracellular" evidence="7">
    <location>
        <begin position="186"/>
        <end position="211"/>
    </location>
</feature>
<feature type="transmembrane region" description="Helical; Name=4" evidence="1">
    <location>
        <begin position="212"/>
        <end position="232"/>
    </location>
</feature>
<feature type="topological domain" description="Cytoplasmic" evidence="7">
    <location>
        <begin position="233"/>
        <end position="290"/>
    </location>
</feature>
<feature type="transmembrane region" description="Helical; Name=5" evidence="1">
    <location>
        <begin position="291"/>
        <end position="311"/>
    </location>
</feature>
<feature type="topological domain" description="Extracellular" evidence="7">
    <location>
        <begin position="312"/>
        <end position="324"/>
    </location>
</feature>
<feature type="transmembrane region" description="Helical; Name=6" evidence="1">
    <location>
        <begin position="325"/>
        <end position="345"/>
    </location>
</feature>
<feature type="topological domain" description="Cytoplasmic" evidence="7">
    <location>
        <begin position="346"/>
        <end position="402"/>
    </location>
</feature>
<feature type="transmembrane region" description="Helical; Name=7" evidence="1">
    <location>
        <begin position="403"/>
        <end position="423"/>
    </location>
</feature>
<feature type="topological domain" description="Extracellular" evidence="7">
    <location>
        <begin position="424"/>
        <end position="439"/>
    </location>
</feature>
<feature type="mutagenesis site" description="Nearly abolished photoreceptor activity." evidence="4">
    <original>W</original>
    <variation>A</variation>
    <location>
        <position position="77"/>
    </location>
</feature>
<feature type="mutagenesis site" description="In xu10; loss of phototaxis behavior due to impaired photoreceptor activity." evidence="3 4">
    <original>S</original>
    <variation>F</variation>
    <location>
        <position position="226"/>
    </location>
</feature>
<feature type="mutagenesis site" description="Nearly abolished photoreceptor activity." evidence="4">
    <original>W</original>
    <variation>A</variation>
    <location>
        <position position="328"/>
    </location>
</feature>
<feature type="mutagenesis site" description="In xu8; loss of phototaxis behavior due to impaired photoreceptor activity." evidence="3 4">
    <original>A</original>
    <variation>V</variation>
    <location>
        <position position="332"/>
    </location>
</feature>
<feature type="mutagenesis site" description="In xu7; loss of phototaxis behavior. Loss of phototransduction in ASJ neurons. Slightly reduces lifespan under constant white light exposure as compared to wild-type." evidence="3 5">
    <original>R</original>
    <variation>H</variation>
    <location>
        <position position="401"/>
    </location>
</feature>
<proteinExistence type="evidence at protein level"/>
<sequence>MPPPSSHSNIFHSTFKHTVKETMANAKKTMIAKILSSRNKWAICDRTLYPIYYLLLILGLNQSIRPNNSLLFRIYSWLVFCLLLFTTLRKFNQVGVRPNGTRENLQEFFANPRSMITLCNALIMLSGLLASLQLYTLGAKRLKPLKILCQFSLNVRTKQAERRQFMINTFLAVFSGLLALTMAATYAMSKWGYILYIVGTPNLDTETIFCVLLDSYALFVSRAAISALAILFYQHCSVIRRSIKHLINEMVPAEQDECPLPESSLQKIHDCQISYQRIFNGKAVIEEYYSFVLFYSYGVCIPIFCFLMFVGMSAQSICWSEVVSIVIWIVNAILVLLLFSLPAFMINEDGDRLVASSFRMYHETFHEERDLTVLSQMTFFTFQIHSTKLTLSACNYFYMDRSILLSLFSAILTYFLILWEFDIKNNQSLQNIANHTIHT</sequence>
<reference key="1">
    <citation type="journal article" date="1998" name="Science">
        <title>Genome sequence of the nematode C. elegans: a platform for investigating biology.</title>
        <authorList>
            <consortium name="The C. elegans sequencing consortium"/>
        </authorList>
    </citation>
    <scope>NUCLEOTIDE SEQUENCE [LARGE SCALE GENOMIC DNA]</scope>
    <source>
        <strain>Bristol N2</strain>
    </source>
</reference>
<reference key="2">
    <citation type="submission" date="2001-06" db="EMBL/GenBank/DDBJ databases">
        <title>Gustatory related receptors in nematodes.</title>
        <authorList>
            <person name="Robertson H.M."/>
        </authorList>
    </citation>
    <scope>NUCLEOTIDE SEQUENCE [MRNA] OF 13-439</scope>
</reference>
<reference key="3">
    <citation type="journal article" date="2008" name="PLoS Biol.">
        <title>A novel molecular solution for ultraviolet light detection in Caenorhabditis elegans.</title>
        <authorList>
            <person name="Edwards S.L."/>
            <person name="Charlie N.K."/>
            <person name="Milfort M.C."/>
            <person name="Brown B.S."/>
            <person name="Gravlin C.N."/>
            <person name="Knecht J.E."/>
            <person name="Miller K.G."/>
        </authorList>
    </citation>
    <scope>FUNCTION</scope>
    <scope>DISRUPTION PHENOTYPE</scope>
    <scope>TISSUE SPECIFICITY</scope>
</reference>
<reference key="4">
    <citation type="journal article" date="2010" name="Nat. Neurosci.">
        <title>C. elegans phototransduction requires a G protein-dependent cGMP pathway and a taste receptor homolog.</title>
        <authorList>
            <person name="Liu J."/>
            <person name="Ward A."/>
            <person name="Gao J."/>
            <person name="Dong Y."/>
            <person name="Nishio N."/>
            <person name="Inada H."/>
            <person name="Kang L."/>
            <person name="Yu Y."/>
            <person name="Ma D."/>
            <person name="Xu T."/>
            <person name="Mori I."/>
            <person name="Xie Z."/>
            <person name="Xu X.Z."/>
        </authorList>
    </citation>
    <scope>FUNCTION</scope>
    <scope>MUTAGENESIS OF SER-226; ALA-332 AND ARG-401</scope>
</reference>
<reference key="5">
    <citation type="journal article" date="2016" name="Cell">
        <title>The C. elegans taste receptor homolog LITE-1 is a photoreceptor.</title>
        <authorList>
            <person name="Gong J."/>
            <person name="Yuan Y."/>
            <person name="Ward A."/>
            <person name="Kang L."/>
            <person name="Zhang B."/>
            <person name="Wu Z."/>
            <person name="Peng J."/>
            <person name="Feng Z."/>
            <person name="Liu J."/>
            <person name="Xu X.Z."/>
        </authorList>
    </citation>
    <scope>FUNCTION</scope>
    <scope>SUBCELLULAR LOCATION</scope>
    <scope>TOPOLOGY</scope>
    <scope>DOMAIN</scope>
    <scope>DISRUPTION PHENOTYPE</scope>
    <scope>MUTAGENESIS OF TRP-77; SER-226; TRP-328 AND ALA-332</scope>
</reference>
<reference key="6">
    <citation type="journal article" date="2017" name="Cell">
        <title>The C. elegans taste receptor homolog LITE-1 is a photoreceptor.</title>
        <authorList>
            <person name="Gong J."/>
            <person name="Yuan Y."/>
            <person name="Ward A."/>
            <person name="Kang L."/>
            <person name="Zhang B."/>
            <person name="Wu Z."/>
            <person name="Peng J."/>
            <person name="Feng Z."/>
            <person name="Liu J."/>
            <person name="Xu X.Z.S."/>
        </authorList>
    </citation>
    <scope>ERRATUM OF PUBMED:27863243</scope>
</reference>
<reference key="7">
    <citation type="journal article" date="2018" name="Nat. Commun.">
        <title>Visible light reduces C. elegans longevity.</title>
        <authorList>
            <person name="De Magalhaes Filho C.D."/>
            <person name="Henriquez B."/>
            <person name="Seah N.E."/>
            <person name="Evans R.M."/>
            <person name="Lapierre L.R."/>
            <person name="Dillin A."/>
        </authorList>
    </citation>
    <scope>FUNCTION</scope>
    <scope>MUTAGENESIS OF ARG-401</scope>
</reference>
<dbReference type="EMBL" id="BX284606">
    <property type="protein sequence ID" value="CCD64541.1"/>
    <property type="molecule type" value="Genomic_DNA"/>
</dbReference>
<dbReference type="EMBL" id="AF387605">
    <property type="protein sequence ID" value="AAK70488.1"/>
    <property type="molecule type" value="mRNA"/>
</dbReference>
<dbReference type="PIR" id="T15490">
    <property type="entry name" value="T15490"/>
</dbReference>
<dbReference type="RefSeq" id="NP_509043.3">
    <property type="nucleotide sequence ID" value="NM_076642.5"/>
</dbReference>
<dbReference type="SMR" id="Q17990"/>
<dbReference type="FunCoup" id="Q17990">
    <property type="interactions" value="5"/>
</dbReference>
<dbReference type="STRING" id="6239.C14F11.3.1"/>
<dbReference type="TCDB" id="1.A.69.3.5">
    <property type="family name" value="the heteromeric odorant receptor channel (horc) family"/>
</dbReference>
<dbReference type="PaxDb" id="6239-C14F11.3"/>
<dbReference type="EnsemblMetazoa" id="C14F11.3.1">
    <property type="protein sequence ID" value="C14F11.3.1"/>
    <property type="gene ID" value="WBGene00001803"/>
</dbReference>
<dbReference type="GeneID" id="180894"/>
<dbReference type="KEGG" id="cel:CELE_C14F11.3"/>
<dbReference type="UCSC" id="C14F11.3">
    <property type="organism name" value="c. elegans"/>
</dbReference>
<dbReference type="AGR" id="WB:WBGene00001803"/>
<dbReference type="CTD" id="180894"/>
<dbReference type="WormBase" id="C14F11.3">
    <property type="protein sequence ID" value="CE29579"/>
    <property type="gene ID" value="WBGene00001803"/>
    <property type="gene designation" value="lite-1"/>
</dbReference>
<dbReference type="eggNOG" id="ENOG502TFJI">
    <property type="taxonomic scope" value="Eukaryota"/>
</dbReference>
<dbReference type="GeneTree" id="ENSGT00940000166130"/>
<dbReference type="HOGENOM" id="CLU_625900_0_0_1"/>
<dbReference type="InParanoid" id="Q17990"/>
<dbReference type="OMA" id="WAICDRT"/>
<dbReference type="OrthoDB" id="5800391at2759"/>
<dbReference type="PRO" id="PR:Q17990"/>
<dbReference type="Proteomes" id="UP000001940">
    <property type="component" value="Chromosome X"/>
</dbReference>
<dbReference type="Bgee" id="WBGene00001803">
    <property type="expression patterns" value="Expressed in larva and 2 other cell types or tissues"/>
</dbReference>
<dbReference type="GO" id="GO:0030424">
    <property type="term" value="C:axon"/>
    <property type="evidence" value="ECO:0000318"/>
    <property type="project" value="GO_Central"/>
</dbReference>
<dbReference type="GO" id="GO:0030425">
    <property type="term" value="C:dendrite"/>
    <property type="evidence" value="ECO:0000318"/>
    <property type="project" value="GO_Central"/>
</dbReference>
<dbReference type="GO" id="GO:0043005">
    <property type="term" value="C:neuron projection"/>
    <property type="evidence" value="ECO:0000314"/>
    <property type="project" value="WormBase"/>
</dbReference>
<dbReference type="GO" id="GO:0043025">
    <property type="term" value="C:neuronal cell body"/>
    <property type="evidence" value="ECO:0000314"/>
    <property type="project" value="WormBase"/>
</dbReference>
<dbReference type="GO" id="GO:0005886">
    <property type="term" value="C:plasma membrane"/>
    <property type="evidence" value="ECO:0000314"/>
    <property type="project" value="UniProtKB"/>
</dbReference>
<dbReference type="GO" id="GO:0009882">
    <property type="term" value="F:blue light photoreceptor activity"/>
    <property type="evidence" value="ECO:0000314"/>
    <property type="project" value="UniProtKB"/>
</dbReference>
<dbReference type="GO" id="GO:0004930">
    <property type="term" value="F:G protein-coupled receptor activity"/>
    <property type="evidence" value="ECO:0007669"/>
    <property type="project" value="UniProtKB-KW"/>
</dbReference>
<dbReference type="GO" id="GO:0004888">
    <property type="term" value="F:transmembrane signaling receptor activity"/>
    <property type="evidence" value="ECO:0000250"/>
    <property type="project" value="WormBase"/>
</dbReference>
<dbReference type="GO" id="GO:0007186">
    <property type="term" value="P:G protein-coupled receptor signaling pathway"/>
    <property type="evidence" value="ECO:0000303"/>
    <property type="project" value="UniProtKB"/>
</dbReference>
<dbReference type="GO" id="GO:0007626">
    <property type="term" value="P:locomotory behavior"/>
    <property type="evidence" value="ECO:0000315"/>
    <property type="project" value="WormBase"/>
</dbReference>
<dbReference type="GO" id="GO:0046957">
    <property type="term" value="P:negative phototaxis"/>
    <property type="evidence" value="ECO:0000315"/>
    <property type="project" value="UniProtKB"/>
</dbReference>
<dbReference type="GO" id="GO:0007602">
    <property type="term" value="P:phototransduction"/>
    <property type="evidence" value="ECO:0000315"/>
    <property type="project" value="UniProtKB"/>
</dbReference>
<dbReference type="GO" id="GO:0009637">
    <property type="term" value="P:response to blue light"/>
    <property type="evidence" value="ECO:0000315"/>
    <property type="project" value="WormBase"/>
</dbReference>
<dbReference type="GO" id="GO:0009411">
    <property type="term" value="P:response to UV"/>
    <property type="evidence" value="ECO:0000315"/>
    <property type="project" value="WormBase"/>
</dbReference>
<dbReference type="GO" id="GO:0070141">
    <property type="term" value="P:response to UV-A"/>
    <property type="evidence" value="ECO:0000314"/>
    <property type="project" value="UniProtKB"/>
</dbReference>
<dbReference type="GO" id="GO:0050909">
    <property type="term" value="P:sensory perception of taste"/>
    <property type="evidence" value="ECO:0007669"/>
    <property type="project" value="InterPro"/>
</dbReference>
<dbReference type="InterPro" id="IPR013604">
    <property type="entry name" value="7TM_chemorcpt"/>
</dbReference>
<dbReference type="PANTHER" id="PTHR21421">
    <property type="entry name" value="GUSTATORY RECEPTOR"/>
    <property type="match status" value="1"/>
</dbReference>
<dbReference type="PANTHER" id="PTHR21421:SF29">
    <property type="entry name" value="GUSTATORY RECEPTOR 5A FOR TREHALOSE-RELATED"/>
    <property type="match status" value="1"/>
</dbReference>
<dbReference type="Pfam" id="PF08395">
    <property type="entry name" value="7tm_7"/>
    <property type="match status" value="1"/>
</dbReference>